<evidence type="ECO:0000255" key="1">
    <source>
        <dbReference type="HAMAP-Rule" id="MF_00695"/>
    </source>
</evidence>
<proteinExistence type="inferred from homology"/>
<organism>
    <name type="scientific">Salmonella agona (strain SL483)</name>
    <dbReference type="NCBI Taxonomy" id="454166"/>
    <lineage>
        <taxon>Bacteria</taxon>
        <taxon>Pseudomonadati</taxon>
        <taxon>Pseudomonadota</taxon>
        <taxon>Gammaproteobacteria</taxon>
        <taxon>Enterobacterales</taxon>
        <taxon>Enterobacteriaceae</taxon>
        <taxon>Salmonella</taxon>
    </lineage>
</organism>
<feature type="chain" id="PRO_1000132297" description="High frequency lysogenization protein HflD homolog">
    <location>
        <begin position="1"/>
        <end position="213"/>
    </location>
</feature>
<feature type="coiled-coil region" evidence="1">
    <location>
        <begin position="79"/>
        <end position="122"/>
    </location>
</feature>
<sequence>MAKNYYDITLALSGICQSARLVQQLAHQGHCDADALHVSLNSVIDMNPSSTLGVFGGSEANLRLGLETLLGVLNASSRQGLNAELTRYTLSLMVLERKLSSAKGALNTLGDRINGLQRQLDHFDLQSDTLMSAMAGIYVDVISPLGPRIQVTGSPAVLQSPQVQAKVRASLLAGIRAAVLWHQVGGGRLQLMFSRHRLTTQAKQILAHLTPEL</sequence>
<name>HFLD_SALA4</name>
<comment type="subcellular location">
    <subcellularLocation>
        <location>Cytoplasm</location>
    </subcellularLocation>
    <subcellularLocation>
        <location evidence="1">Cell inner membrane</location>
        <topology evidence="1">Peripheral membrane protein</topology>
        <orientation evidence="1">Cytoplasmic side</orientation>
    </subcellularLocation>
</comment>
<comment type="similarity">
    <text evidence="1">Belongs to the HflD family.</text>
</comment>
<protein>
    <recommendedName>
        <fullName evidence="1">High frequency lysogenization protein HflD homolog</fullName>
    </recommendedName>
</protein>
<keyword id="KW-0997">Cell inner membrane</keyword>
<keyword id="KW-1003">Cell membrane</keyword>
<keyword id="KW-0175">Coiled coil</keyword>
<keyword id="KW-0963">Cytoplasm</keyword>
<keyword id="KW-0472">Membrane</keyword>
<gene>
    <name evidence="1" type="primary">hflD</name>
    <name type="ordered locus">SeAg_B1951</name>
</gene>
<dbReference type="EMBL" id="CP001138">
    <property type="protein sequence ID" value="ACH49663.1"/>
    <property type="molecule type" value="Genomic_DNA"/>
</dbReference>
<dbReference type="RefSeq" id="WP_001519653.1">
    <property type="nucleotide sequence ID" value="NC_011149.1"/>
</dbReference>
<dbReference type="SMR" id="B5F8C0"/>
<dbReference type="KEGG" id="sea:SeAg_B1951"/>
<dbReference type="HOGENOM" id="CLU_098920_0_0_6"/>
<dbReference type="Proteomes" id="UP000008819">
    <property type="component" value="Chromosome"/>
</dbReference>
<dbReference type="GO" id="GO:0005737">
    <property type="term" value="C:cytoplasm"/>
    <property type="evidence" value="ECO:0007669"/>
    <property type="project" value="UniProtKB-SubCell"/>
</dbReference>
<dbReference type="GO" id="GO:0005886">
    <property type="term" value="C:plasma membrane"/>
    <property type="evidence" value="ECO:0007669"/>
    <property type="project" value="UniProtKB-SubCell"/>
</dbReference>
<dbReference type="FunFam" id="1.10.3890.10:FF:000001">
    <property type="entry name" value="High frequency lysogenization protein HflD homolog"/>
    <property type="match status" value="1"/>
</dbReference>
<dbReference type="Gene3D" id="1.10.3890.10">
    <property type="entry name" value="HflD-like"/>
    <property type="match status" value="1"/>
</dbReference>
<dbReference type="HAMAP" id="MF_00695">
    <property type="entry name" value="HflD_protein"/>
    <property type="match status" value="1"/>
</dbReference>
<dbReference type="InterPro" id="IPR007451">
    <property type="entry name" value="HflD"/>
</dbReference>
<dbReference type="InterPro" id="IPR035932">
    <property type="entry name" value="HflD-like_sf"/>
</dbReference>
<dbReference type="NCBIfam" id="NF001245">
    <property type="entry name" value="PRK00218.1-1"/>
    <property type="match status" value="1"/>
</dbReference>
<dbReference type="NCBIfam" id="NF001246">
    <property type="entry name" value="PRK00218.1-2"/>
    <property type="match status" value="1"/>
</dbReference>
<dbReference type="NCBIfam" id="NF001248">
    <property type="entry name" value="PRK00218.1-4"/>
    <property type="match status" value="1"/>
</dbReference>
<dbReference type="NCBIfam" id="NF001249">
    <property type="entry name" value="PRK00218.1-5"/>
    <property type="match status" value="1"/>
</dbReference>
<dbReference type="PANTHER" id="PTHR38100">
    <property type="entry name" value="HIGH FREQUENCY LYSOGENIZATION PROTEIN HFLD"/>
    <property type="match status" value="1"/>
</dbReference>
<dbReference type="PANTHER" id="PTHR38100:SF1">
    <property type="entry name" value="HIGH FREQUENCY LYSOGENIZATION PROTEIN HFLD"/>
    <property type="match status" value="1"/>
</dbReference>
<dbReference type="Pfam" id="PF04356">
    <property type="entry name" value="DUF489"/>
    <property type="match status" value="1"/>
</dbReference>
<dbReference type="SUPFAM" id="SSF101322">
    <property type="entry name" value="YcfC-like"/>
    <property type="match status" value="1"/>
</dbReference>
<accession>B5F8C0</accession>
<reference key="1">
    <citation type="journal article" date="2011" name="J. Bacteriol.">
        <title>Comparative genomics of 28 Salmonella enterica isolates: evidence for CRISPR-mediated adaptive sublineage evolution.</title>
        <authorList>
            <person name="Fricke W.F."/>
            <person name="Mammel M.K."/>
            <person name="McDermott P.F."/>
            <person name="Tartera C."/>
            <person name="White D.G."/>
            <person name="Leclerc J.E."/>
            <person name="Ravel J."/>
            <person name="Cebula T.A."/>
        </authorList>
    </citation>
    <scope>NUCLEOTIDE SEQUENCE [LARGE SCALE GENOMIC DNA]</scope>
    <source>
        <strain>SL483</strain>
    </source>
</reference>